<organism>
    <name type="scientific">Caenorhabditis elegans</name>
    <dbReference type="NCBI Taxonomy" id="6239"/>
    <lineage>
        <taxon>Eukaryota</taxon>
        <taxon>Metazoa</taxon>
        <taxon>Ecdysozoa</taxon>
        <taxon>Nematoda</taxon>
        <taxon>Chromadorea</taxon>
        <taxon>Rhabditida</taxon>
        <taxon>Rhabditina</taxon>
        <taxon>Rhabditomorpha</taxon>
        <taxon>Rhabditoidea</taxon>
        <taxon>Rhabditidae</taxon>
        <taxon>Peloderinae</taxon>
        <taxon>Caenorhabditis</taxon>
    </lineage>
</organism>
<name>PYC1_CAEEL</name>
<keyword id="KW-0067">ATP-binding</keyword>
<keyword id="KW-0092">Biotin</keyword>
<keyword id="KW-0963">Cytoplasm</keyword>
<keyword id="KW-0903">Direct protein sequencing</keyword>
<keyword id="KW-0312">Gluconeogenesis</keyword>
<keyword id="KW-0436">Ligase</keyword>
<keyword id="KW-0479">Metal-binding</keyword>
<keyword id="KW-0511">Multifunctional enzyme</keyword>
<keyword id="KW-0547">Nucleotide-binding</keyword>
<keyword id="KW-0670">Pyruvate</keyword>
<keyword id="KW-1185">Reference proteome</keyword>
<keyword id="KW-0862">Zinc</keyword>
<reference evidence="9" key="1">
    <citation type="journal article" date="2001" name="DNA Seq.">
        <title>Characterization of a cadmium-inducible isoform of pyruvate carboxylase from Caenorhabditis elegans.</title>
        <authorList>
            <person name="Liao V.H.-C."/>
            <person name="Freedman J.H."/>
        </authorList>
    </citation>
    <scope>NUCLEOTIDE SEQUENCE [MRNA]</scope>
</reference>
<reference evidence="10" key="2">
    <citation type="journal article" date="1998" name="Science">
        <title>Genome sequence of the nematode C. elegans: a platform for investigating biology.</title>
        <authorList>
            <consortium name="The C. elegans sequencing consortium"/>
        </authorList>
    </citation>
    <scope>NUCLEOTIDE SEQUENCE [LARGE SCALE GENOMIC DNA]</scope>
    <source>
        <strain>Bristol N2</strain>
    </source>
</reference>
<reference key="3">
    <citation type="submission" date="2006-03" db="UniProtKB">
        <authorList>
            <person name="Bienvenut W.V."/>
        </authorList>
    </citation>
    <scope>PROTEIN SEQUENCE OF 286-292; 452-462; 495-503; 718-728; 750-756; 892-902; 1021-1032 AND 1053-1063</scope>
    <scope>IDENTIFICATION BY MASS SPECTROMETRY</scope>
</reference>
<reference key="4">
    <citation type="journal article" date="2013" name="Mitochondrion">
        <title>Mitochondrial SIRT4-type proteins in Caenorhabditis elegans and mammals interact with pyruvate carboxylase and other acetylated biotin-dependent carboxylases.</title>
        <authorList>
            <person name="Wirth M."/>
            <person name="Karaca S."/>
            <person name="Wenzel D."/>
            <person name="Ho L."/>
            <person name="Tishkoff D."/>
            <person name="Lombard D.B."/>
            <person name="Verdin E."/>
            <person name="Urlaub H."/>
            <person name="Jedrusik-Bode M."/>
            <person name="Fischle W."/>
        </authorList>
    </citation>
    <scope>INTERACTION WITH SIR-2.2 AND SIR-2.3</scope>
    <scope>IDENTIFICATION BY MASS SPECTROMETRY</scope>
</reference>
<accession>O17732</accession>
<comment type="function">
    <text evidence="2">Pyruvate carboxylase catalyzes a 2-step reaction, involving the ATP-dependent carboxylation of the covalently attached biotin in the first step and the transfer of the carboxyl group to pyruvate in the second.</text>
</comment>
<comment type="catalytic activity">
    <reaction evidence="8">
        <text>hydrogencarbonate + pyruvate + ATP = oxaloacetate + ADP + phosphate + H(+)</text>
        <dbReference type="Rhea" id="RHEA:20844"/>
        <dbReference type="ChEBI" id="CHEBI:15361"/>
        <dbReference type="ChEBI" id="CHEBI:15378"/>
        <dbReference type="ChEBI" id="CHEBI:16452"/>
        <dbReference type="ChEBI" id="CHEBI:17544"/>
        <dbReference type="ChEBI" id="CHEBI:30616"/>
        <dbReference type="ChEBI" id="CHEBI:43474"/>
        <dbReference type="ChEBI" id="CHEBI:456216"/>
        <dbReference type="EC" id="6.4.1.1"/>
    </reaction>
</comment>
<comment type="cofactor">
    <cofactor evidence="2">
        <name>biotin</name>
        <dbReference type="ChEBI" id="CHEBI:57586"/>
    </cofactor>
</comment>
<comment type="cofactor">
    <cofactor evidence="2">
        <name>Zn(2+)</name>
        <dbReference type="ChEBI" id="CHEBI:29105"/>
    </cofactor>
</comment>
<comment type="pathway">
    <text>Carbohydrate biosynthesis; gluconeogenesis.</text>
</comment>
<comment type="subunit">
    <text evidence="7">Interacts with sir-2.2 and sir-2.3.</text>
</comment>
<comment type="subcellular location">
    <subcellularLocation>
        <location evidence="2">Cytoplasm</location>
    </subcellularLocation>
</comment>
<sequence length="1175" mass="129285">MRFSRIPPIFANVVRQTHYRNYANGVIKPREFNKVMVANRGEIAIRVFRALTELNKTSVAIYAEQDKNSMHRLKADEAYLVGKGLPPVAAYLTIDQIIETALKHNIDAIHPGYGFLSERSDFAAACQNAGIVFIGPSPDVMARMGDKVAARQAAIEAGVQVVPGTPGPITTADEAVEFAKQYGTPIILKAAYGGGGRGIRRVDKLEEVEEAFRRSYSEAQAAFGDGSLFVEKFVERPRHIEVQLLGDHHGNIVHLYERDCSVQRRHQKVVEIAPAPALPEGVREKILADALRLARHVGYQNAGTVEFLVDQKGNYYFIEVNARLQVEHTVTEEITGVDLVQAQIRIAEGKSLDDLKLSQETIQTTGSAIQCRVTTEDPAKGFQPDSGRIEVFRSGEGMGIRLDSASAFAGSVISPHYDSLMVKVIASARNHPNAAAKMIRALKKFRIRGVKTNIPFLLNVLRQPSFLDASVDTYFIDEHPELFQFKPSQNRAQKLLNYLGEVKVNGPTTPLATDLKPAVVSPPIPYIPAGAKPPTGLRDVLVQRGPTEFAKEVRSRPGCMITDTTFRDAHQSLLATRVRTYDMAAISPFVAQSFNGLFSLENWGGATFDVSMRFLHECPWERLQTLRKLIPNIPFQCLLRGANAMGYSNYPDNVIYKFCELAVKNGMDVFRVFDSLNYLPNLLVGMEAVGKAGGVVEAAIAYTGDVTDKSRDKYDLKYYLNLADQLVKAQAHILSIKDMAGVLKPEAAKLLIGALRDKFPDIPIHVHTHDTSGAGVAAMLECAKAGADVVDAAVDSMSGMTSQPSMGAIVASLQGTKHDTGLSLDDISKYSAYWESTRQLYAPFECATTMKSGNADVYKHEIPGGQYTNLQFQAFSLGLGPQFDEVKRMYREANLVLGDIIKVTPSSKIVGDLAQFMVQNNLTRETLVDRADDLSFPKSVVDFMQGNVGQPPYGFPEPLRTKVLRGKPKVDGRPGENAKPVDLDAVKVELEEKHGRTLSEEDVMSYSMFPTVFDEFETFRQQYGPVDKLPTRLFLTGLEIAEEVDVEIESGKTLAIQLLAEGKLNKRGEREVFFDLNGQMRSIFVVDKEASKEIVTRPRALPGVRGHIGAPMPGDVLELKIKEGDKVTKKQPLFVLSAMKMEMVIDSPIAGTVKAIHAPQGTKCSAGDLVVEVEP</sequence>
<dbReference type="EC" id="6.4.1.1"/>
<dbReference type="EMBL" id="AF237467">
    <property type="protein sequence ID" value="AAF60326.1"/>
    <property type="molecule type" value="mRNA"/>
</dbReference>
<dbReference type="EMBL" id="Z81052">
    <property type="protein sequence ID" value="CAB02872.1"/>
    <property type="molecule type" value="Genomic_DNA"/>
</dbReference>
<dbReference type="PIR" id="T20346">
    <property type="entry name" value="T20346"/>
</dbReference>
<dbReference type="RefSeq" id="NP_001256376.1">
    <property type="nucleotide sequence ID" value="NM_001269447.1"/>
</dbReference>
<dbReference type="RefSeq" id="NP_001369995.1">
    <property type="nucleotide sequence ID" value="NM_001383412.2"/>
</dbReference>
<dbReference type="SMR" id="O17732"/>
<dbReference type="BioGRID" id="44641">
    <property type="interactions" value="19"/>
</dbReference>
<dbReference type="DIP" id="DIP-25614N"/>
<dbReference type="FunCoup" id="O17732">
    <property type="interactions" value="1081"/>
</dbReference>
<dbReference type="IntAct" id="O17732">
    <property type="interactions" value="3"/>
</dbReference>
<dbReference type="STRING" id="6239.D2023.2a.2"/>
<dbReference type="iPTMnet" id="O17732"/>
<dbReference type="PaxDb" id="6239-D2023.2a.1"/>
<dbReference type="PeptideAtlas" id="O17732"/>
<dbReference type="EnsemblMetazoa" id="D2023.2a.1">
    <property type="protein sequence ID" value="D2023.2a.1"/>
    <property type="gene ID" value="WBGene00004258"/>
</dbReference>
<dbReference type="EnsemblMetazoa" id="D2023.2a.2">
    <property type="protein sequence ID" value="D2023.2a.2"/>
    <property type="gene ID" value="WBGene00004258"/>
</dbReference>
<dbReference type="GeneID" id="179616"/>
<dbReference type="UCSC" id="D2023.2.1">
    <property type="organism name" value="c. elegans"/>
</dbReference>
<dbReference type="AGR" id="WB:WBGene00004258"/>
<dbReference type="WormBase" id="D2023.2a">
    <property type="protein sequence ID" value="CE09072"/>
    <property type="gene ID" value="WBGene00004258"/>
    <property type="gene designation" value="pyc-1"/>
</dbReference>
<dbReference type="eggNOG" id="KOG0369">
    <property type="taxonomic scope" value="Eukaryota"/>
</dbReference>
<dbReference type="GeneTree" id="ENSGT00900000141164"/>
<dbReference type="HOGENOM" id="CLU_000395_0_1_1"/>
<dbReference type="InParanoid" id="O17732"/>
<dbReference type="OMA" id="AEACICY"/>
<dbReference type="OrthoDB" id="196847at2759"/>
<dbReference type="PhylomeDB" id="O17732"/>
<dbReference type="BRENDA" id="6.4.1.1">
    <property type="organism ID" value="1045"/>
</dbReference>
<dbReference type="Reactome" id="R-CEL-196780">
    <property type="pathway name" value="Biotin transport and metabolism"/>
</dbReference>
<dbReference type="Reactome" id="R-CEL-70263">
    <property type="pathway name" value="Gluconeogenesis"/>
</dbReference>
<dbReference type="Reactome" id="R-CEL-70268">
    <property type="pathway name" value="Pyruvate metabolism"/>
</dbReference>
<dbReference type="UniPathway" id="UPA00138"/>
<dbReference type="PRO" id="PR:O17732"/>
<dbReference type="Proteomes" id="UP000001940">
    <property type="component" value="Chromosome V"/>
</dbReference>
<dbReference type="Bgee" id="WBGene00004258">
    <property type="expression patterns" value="Expressed in adult organism and 4 other cell types or tissues"/>
</dbReference>
<dbReference type="ExpressionAtlas" id="O17732">
    <property type="expression patterns" value="baseline and differential"/>
</dbReference>
<dbReference type="GO" id="GO:0005739">
    <property type="term" value="C:mitochondrion"/>
    <property type="evidence" value="ECO:0007005"/>
    <property type="project" value="WormBase"/>
</dbReference>
<dbReference type="GO" id="GO:0005524">
    <property type="term" value="F:ATP binding"/>
    <property type="evidence" value="ECO:0007669"/>
    <property type="project" value="UniProtKB-KW"/>
</dbReference>
<dbReference type="GO" id="GO:0046872">
    <property type="term" value="F:metal ion binding"/>
    <property type="evidence" value="ECO:0007669"/>
    <property type="project" value="UniProtKB-KW"/>
</dbReference>
<dbReference type="GO" id="GO:0004736">
    <property type="term" value="F:pyruvate carboxylase activity"/>
    <property type="evidence" value="ECO:0000318"/>
    <property type="project" value="GO_Central"/>
</dbReference>
<dbReference type="GO" id="GO:0006094">
    <property type="term" value="P:gluconeogenesis"/>
    <property type="evidence" value="ECO:0000318"/>
    <property type="project" value="GO_Central"/>
</dbReference>
<dbReference type="GO" id="GO:0006090">
    <property type="term" value="P:pyruvate metabolic process"/>
    <property type="evidence" value="ECO:0000318"/>
    <property type="project" value="GO_Central"/>
</dbReference>
<dbReference type="CDD" id="cd06850">
    <property type="entry name" value="biotinyl_domain"/>
    <property type="match status" value="1"/>
</dbReference>
<dbReference type="CDD" id="cd07937">
    <property type="entry name" value="DRE_TIM_PC_TC_5S"/>
    <property type="match status" value="1"/>
</dbReference>
<dbReference type="FunFam" id="2.40.50.100:FF:000003">
    <property type="entry name" value="Acetyl-CoA carboxylase biotin carboxyl carrier protein"/>
    <property type="match status" value="1"/>
</dbReference>
<dbReference type="FunFam" id="3.30.1490.20:FF:000003">
    <property type="entry name" value="acetyl-CoA carboxylase isoform X1"/>
    <property type="match status" value="1"/>
</dbReference>
<dbReference type="FunFam" id="3.40.50.20:FF:000010">
    <property type="entry name" value="Propionyl-CoA carboxylase subunit alpha"/>
    <property type="match status" value="1"/>
</dbReference>
<dbReference type="FunFam" id="3.10.600.10:FF:000006">
    <property type="entry name" value="Pyruvate carboxylase"/>
    <property type="match status" value="1"/>
</dbReference>
<dbReference type="FunFam" id="3.20.20.70:FF:000033">
    <property type="entry name" value="Pyruvate carboxylase"/>
    <property type="match status" value="1"/>
</dbReference>
<dbReference type="FunFam" id="3.30.470.20:FF:000012">
    <property type="entry name" value="Pyruvate carboxylase"/>
    <property type="match status" value="1"/>
</dbReference>
<dbReference type="Gene3D" id="2.40.50.100">
    <property type="match status" value="1"/>
</dbReference>
<dbReference type="Gene3D" id="3.20.20.70">
    <property type="entry name" value="Aldolase class I"/>
    <property type="match status" value="1"/>
</dbReference>
<dbReference type="Gene3D" id="3.30.470.20">
    <property type="entry name" value="ATP-grasp fold, B domain"/>
    <property type="match status" value="1"/>
</dbReference>
<dbReference type="Gene3D" id="3.10.600.10">
    <property type="entry name" value="pyruvate carboxylase f1077a mutant domain"/>
    <property type="match status" value="1"/>
</dbReference>
<dbReference type="InterPro" id="IPR013785">
    <property type="entry name" value="Aldolase_TIM"/>
</dbReference>
<dbReference type="InterPro" id="IPR011761">
    <property type="entry name" value="ATP-grasp"/>
</dbReference>
<dbReference type="InterPro" id="IPR005481">
    <property type="entry name" value="BC-like_N"/>
</dbReference>
<dbReference type="InterPro" id="IPR011764">
    <property type="entry name" value="Biotin_carboxylation_dom"/>
</dbReference>
<dbReference type="InterPro" id="IPR005482">
    <property type="entry name" value="Biotin_COase_C"/>
</dbReference>
<dbReference type="InterPro" id="IPR000089">
    <property type="entry name" value="Biotin_lipoyl"/>
</dbReference>
<dbReference type="InterPro" id="IPR003379">
    <property type="entry name" value="Carboxylase_cons_dom"/>
</dbReference>
<dbReference type="InterPro" id="IPR005479">
    <property type="entry name" value="CbamoylP_synth_lsu-like_ATP-bd"/>
</dbReference>
<dbReference type="InterPro" id="IPR055268">
    <property type="entry name" value="PCB-like"/>
</dbReference>
<dbReference type="InterPro" id="IPR016185">
    <property type="entry name" value="PreATP-grasp_dom_sf"/>
</dbReference>
<dbReference type="InterPro" id="IPR000891">
    <property type="entry name" value="PYR_CT"/>
</dbReference>
<dbReference type="InterPro" id="IPR005930">
    <property type="entry name" value="Pyruv_COase"/>
</dbReference>
<dbReference type="InterPro" id="IPR011054">
    <property type="entry name" value="Rudment_hybrid_motif"/>
</dbReference>
<dbReference type="InterPro" id="IPR011053">
    <property type="entry name" value="Single_hybrid_motif"/>
</dbReference>
<dbReference type="NCBIfam" id="NF006761">
    <property type="entry name" value="PRK09282.1"/>
    <property type="match status" value="1"/>
</dbReference>
<dbReference type="NCBIfam" id="NF009554">
    <property type="entry name" value="PRK12999.1"/>
    <property type="match status" value="1"/>
</dbReference>
<dbReference type="NCBIfam" id="TIGR01235">
    <property type="entry name" value="pyruv_carbox"/>
    <property type="match status" value="1"/>
</dbReference>
<dbReference type="PANTHER" id="PTHR43778">
    <property type="entry name" value="PYRUVATE CARBOXYLASE"/>
    <property type="match status" value="1"/>
</dbReference>
<dbReference type="PANTHER" id="PTHR43778:SF2">
    <property type="entry name" value="PYRUVATE CARBOXYLASE, MITOCHONDRIAL"/>
    <property type="match status" value="1"/>
</dbReference>
<dbReference type="Pfam" id="PF02785">
    <property type="entry name" value="Biotin_carb_C"/>
    <property type="match status" value="1"/>
</dbReference>
<dbReference type="Pfam" id="PF00289">
    <property type="entry name" value="Biotin_carb_N"/>
    <property type="match status" value="1"/>
</dbReference>
<dbReference type="Pfam" id="PF00364">
    <property type="entry name" value="Biotin_lipoyl"/>
    <property type="match status" value="1"/>
</dbReference>
<dbReference type="Pfam" id="PF02786">
    <property type="entry name" value="CPSase_L_D2"/>
    <property type="match status" value="1"/>
</dbReference>
<dbReference type="Pfam" id="PF00682">
    <property type="entry name" value="HMGL-like"/>
    <property type="match status" value="1"/>
</dbReference>
<dbReference type="Pfam" id="PF02436">
    <property type="entry name" value="PYC_OADA"/>
    <property type="match status" value="1"/>
</dbReference>
<dbReference type="PIRSF" id="PIRSF001594">
    <property type="entry name" value="Pyruv_carbox"/>
    <property type="match status" value="1"/>
</dbReference>
<dbReference type="SMART" id="SM00878">
    <property type="entry name" value="Biotin_carb_C"/>
    <property type="match status" value="1"/>
</dbReference>
<dbReference type="SUPFAM" id="SSF51569">
    <property type="entry name" value="Aldolase"/>
    <property type="match status" value="1"/>
</dbReference>
<dbReference type="SUPFAM" id="SSF56059">
    <property type="entry name" value="Glutathione synthetase ATP-binding domain-like"/>
    <property type="match status" value="1"/>
</dbReference>
<dbReference type="SUPFAM" id="SSF89000">
    <property type="entry name" value="post-HMGL domain-like"/>
    <property type="match status" value="1"/>
</dbReference>
<dbReference type="SUPFAM" id="SSF52440">
    <property type="entry name" value="PreATP-grasp domain"/>
    <property type="match status" value="1"/>
</dbReference>
<dbReference type="SUPFAM" id="SSF51246">
    <property type="entry name" value="Rudiment single hybrid motif"/>
    <property type="match status" value="1"/>
</dbReference>
<dbReference type="SUPFAM" id="SSF51230">
    <property type="entry name" value="Single hybrid motif"/>
    <property type="match status" value="1"/>
</dbReference>
<dbReference type="PROSITE" id="PS50975">
    <property type="entry name" value="ATP_GRASP"/>
    <property type="match status" value="1"/>
</dbReference>
<dbReference type="PROSITE" id="PS50979">
    <property type="entry name" value="BC"/>
    <property type="match status" value="1"/>
</dbReference>
<dbReference type="PROSITE" id="PS50968">
    <property type="entry name" value="BIOTINYL_LIPOYL"/>
    <property type="match status" value="1"/>
</dbReference>
<dbReference type="PROSITE" id="PS00867">
    <property type="entry name" value="CPSASE_2"/>
    <property type="match status" value="1"/>
</dbReference>
<dbReference type="PROSITE" id="PS50991">
    <property type="entry name" value="PYR_CT"/>
    <property type="match status" value="1"/>
</dbReference>
<evidence type="ECO:0000250" key="1"/>
<evidence type="ECO:0000250" key="2">
    <source>
        <dbReference type="UniProtKB" id="P11154"/>
    </source>
</evidence>
<evidence type="ECO:0000255" key="3"/>
<evidence type="ECO:0000255" key="4">
    <source>
        <dbReference type="PROSITE-ProRule" id="PRU00409"/>
    </source>
</evidence>
<evidence type="ECO:0000255" key="5">
    <source>
        <dbReference type="PROSITE-ProRule" id="PRU01066"/>
    </source>
</evidence>
<evidence type="ECO:0000255" key="6">
    <source>
        <dbReference type="PROSITE-ProRule" id="PRU01151"/>
    </source>
</evidence>
<evidence type="ECO:0000269" key="7">
    <source>
    </source>
</evidence>
<evidence type="ECO:0000305" key="8"/>
<evidence type="ECO:0000312" key="9">
    <source>
        <dbReference type="EMBL" id="AAF60326.1"/>
    </source>
</evidence>
<evidence type="ECO:0000312" key="10">
    <source>
        <dbReference type="EMBL" id="CAB02872.1"/>
    </source>
</evidence>
<gene>
    <name evidence="9" type="primary">pyc-1</name>
    <name type="ORF">D2023.2</name>
</gene>
<protein>
    <recommendedName>
        <fullName>Pyruvate carboxylase 1</fullName>
        <ecNumber>6.4.1.1</ecNumber>
    </recommendedName>
    <alternativeName>
        <fullName>Pyruvic carboxylase 1</fullName>
        <shortName>PCB 1</shortName>
    </alternativeName>
</protein>
<feature type="chain" id="PRO_0000239937" description="Pyruvate carboxylase 1">
    <location>
        <begin position="1"/>
        <end position="1175"/>
    </location>
</feature>
<feature type="domain" description="Biotin carboxylation" evidence="3">
    <location>
        <begin position="31"/>
        <end position="481"/>
    </location>
</feature>
<feature type="domain" description="ATP-grasp" evidence="4">
    <location>
        <begin position="151"/>
        <end position="348"/>
    </location>
</feature>
<feature type="domain" description="Pyruvate carboxyltransferase" evidence="6">
    <location>
        <begin position="559"/>
        <end position="828"/>
    </location>
</feature>
<feature type="domain" description="Biotinyl-binding" evidence="5">
    <location>
        <begin position="1099"/>
        <end position="1174"/>
    </location>
</feature>
<feature type="active site" evidence="3">
    <location>
        <position position="323"/>
    </location>
</feature>
<feature type="binding site" evidence="3">
    <location>
        <position position="147"/>
    </location>
    <ligand>
        <name>ATP</name>
        <dbReference type="ChEBI" id="CHEBI:30616"/>
    </ligand>
</feature>
<feature type="binding site" evidence="3">
    <location>
        <position position="231"/>
    </location>
    <ligand>
        <name>ATP</name>
        <dbReference type="ChEBI" id="CHEBI:30616"/>
    </ligand>
</feature>
<feature type="binding site" evidence="3">
    <location>
        <position position="266"/>
    </location>
    <ligand>
        <name>ATP</name>
        <dbReference type="ChEBI" id="CHEBI:30616"/>
    </ligand>
</feature>
<feature type="binding site" evidence="1">
    <location>
        <begin position="567"/>
        <end position="571"/>
    </location>
    <ligand>
        <name>substrate</name>
    </ligand>
</feature>
<feature type="binding site" evidence="1">
    <location>
        <position position="568"/>
    </location>
    <ligand>
        <name>a divalent metal cation</name>
        <dbReference type="ChEBI" id="CHEBI:60240"/>
    </ligand>
</feature>
<feature type="binding site" evidence="1">
    <location>
        <position position="640"/>
    </location>
    <ligand>
        <name>substrate</name>
    </ligand>
</feature>
<feature type="binding site" description="via carbamate group" evidence="1">
    <location>
        <position position="737"/>
    </location>
    <ligand>
        <name>a divalent metal cation</name>
        <dbReference type="ChEBI" id="CHEBI:60240"/>
    </ligand>
</feature>
<feature type="binding site" evidence="1">
    <location>
        <position position="767"/>
    </location>
    <ligand>
        <name>a divalent metal cation</name>
        <dbReference type="ChEBI" id="CHEBI:60240"/>
    </ligand>
</feature>
<feature type="binding site" evidence="1">
    <location>
        <position position="769"/>
    </location>
    <ligand>
        <name>a divalent metal cation</name>
        <dbReference type="ChEBI" id="CHEBI:60240"/>
    </ligand>
</feature>
<feature type="binding site" evidence="1">
    <location>
        <position position="904"/>
    </location>
    <ligand>
        <name>substrate</name>
    </ligand>
</feature>
<feature type="modified residue" description="N6-carboxylysine" evidence="1">
    <location>
        <position position="737"/>
    </location>
</feature>
<feature type="modified residue" description="N6-biotinyllysine" evidence="1 5">
    <location>
        <position position="1140"/>
    </location>
</feature>
<proteinExistence type="evidence at protein level"/>